<reference key="1">
    <citation type="journal article" date="2002" name="Proc. Natl. Acad. Sci. U.S.A.">
        <title>Emergence of multiple genotypes of H5N1 avian influenza viruses in Hong Kong SAR.</title>
        <authorList>
            <person name="Guan Y."/>
            <person name="Peiris J.S.M."/>
            <person name="Lipatov A.S."/>
            <person name="Ellis T.M."/>
            <person name="Dyrting K.C."/>
            <person name="Krauss S."/>
            <person name="Zhang L.J."/>
            <person name="Webster R.G."/>
            <person name="Shortridge K.F."/>
        </authorList>
    </citation>
    <scope>NUCLEOTIDE SEQUENCE [GENOMIC RNA]</scope>
</reference>
<protein>
    <recommendedName>
        <fullName evidence="1">Matrix protein 2</fullName>
    </recommendedName>
    <alternativeName>
        <fullName evidence="1">Proton channel protein M2</fullName>
    </alternativeName>
</protein>
<feature type="chain" id="PRO_0000311622" description="Matrix protein 2">
    <location>
        <begin position="1"/>
        <end position="97"/>
    </location>
</feature>
<feature type="topological domain" description="Virion surface" evidence="1">
    <location>
        <begin position="1"/>
        <end position="22"/>
    </location>
</feature>
<feature type="transmembrane region" description="Helical; Signal-anchor for type III membrane protein" evidence="1">
    <location>
        <begin position="23"/>
        <end position="43"/>
    </location>
</feature>
<feature type="topological domain" description="Intravirion" evidence="1">
    <location>
        <begin position="44"/>
        <end position="97"/>
    </location>
</feature>
<feature type="region of interest" description="Disordered" evidence="2">
    <location>
        <begin position="60"/>
        <end position="83"/>
    </location>
</feature>
<feature type="site" description="Essential for channel activity, possibly by being protonated during channel activation, and by forming the channel gate and the selective filter" evidence="1">
    <location>
        <position position="37"/>
    </location>
</feature>
<feature type="site" description="Seems to be involved in pH gating" evidence="1">
    <location>
        <position position="41"/>
    </location>
</feature>
<feature type="modified residue" description="Phosphoserine; by host" evidence="1">
    <location>
        <position position="64"/>
    </location>
</feature>
<feature type="modified residue" description="Phosphoserine; by host" evidence="1">
    <location>
        <position position="82"/>
    </location>
</feature>
<feature type="lipid moiety-binding region" description="S-palmitoyl cysteine; by host" evidence="1">
    <location>
        <position position="50"/>
    </location>
</feature>
<feature type="disulfide bond" description="Interchain (with C-17)" evidence="1">
    <location>
        <position position="17"/>
    </location>
</feature>
<feature type="disulfide bond" description="Interchain (with C-19)" evidence="1">
    <location>
        <position position="19"/>
    </location>
</feature>
<organismHost>
    <name type="scientific">Aves</name>
    <dbReference type="NCBI Taxonomy" id="8782"/>
</organismHost>
<organismHost>
    <name type="scientific">Felis catus</name>
    <name type="common">Cat</name>
    <name type="synonym">Felis silvestris catus</name>
    <dbReference type="NCBI Taxonomy" id="9685"/>
</organismHost>
<organismHost>
    <name type="scientific">Homo sapiens</name>
    <name type="common">Human</name>
    <dbReference type="NCBI Taxonomy" id="9606"/>
</organismHost>
<organismHost>
    <name type="scientific">Panthera pardus</name>
    <name type="common">Leopard</name>
    <name type="synonym">Felis pardus</name>
    <dbReference type="NCBI Taxonomy" id="9691"/>
</organismHost>
<organismHost>
    <name type="scientific">Panthera tigris</name>
    <name type="common">Tiger</name>
    <dbReference type="NCBI Taxonomy" id="9694"/>
</organismHost>
<organismHost>
    <name type="scientific">Sus scrofa</name>
    <name type="common">Pig</name>
    <dbReference type="NCBI Taxonomy" id="9823"/>
</organismHost>
<sequence length="97" mass="11216">MSLLTEVETPTRNEWECKCSDSSDPLVVAASIIGILHLILWILDRLFFKCIYRRLKYGLKRGPSTEGVPESMREEYRQEQQSAVDVDDGHFVNIELE</sequence>
<accession>P0C5T0</accession>
<organism>
    <name type="scientific">Influenza A virus (strain A/Silky Chicken/Hong Kong/SF189/2001 H5N1 genotype A)</name>
    <dbReference type="NCBI Taxonomy" id="196430"/>
    <lineage>
        <taxon>Viruses</taxon>
        <taxon>Riboviria</taxon>
        <taxon>Orthornavirae</taxon>
        <taxon>Negarnaviricota</taxon>
        <taxon>Polyploviricotina</taxon>
        <taxon>Insthoviricetes</taxon>
        <taxon>Articulavirales</taxon>
        <taxon>Orthomyxoviridae</taxon>
        <taxon>Alphainfluenzavirus</taxon>
        <taxon>Alphainfluenzavirus influenzae</taxon>
        <taxon>Influenza A virus</taxon>
    </lineage>
</organism>
<proteinExistence type="inferred from homology"/>
<evidence type="ECO:0000255" key="1">
    <source>
        <dbReference type="HAMAP-Rule" id="MF_04069"/>
    </source>
</evidence>
<evidence type="ECO:0000256" key="2">
    <source>
        <dbReference type="SAM" id="MobiDB-lite"/>
    </source>
</evidence>
<comment type="function">
    <text evidence="1">Forms a proton-selective ion channel that is necessary for the efficient release of the viral genome during virus entry. After attaching to the cell surface, the virion enters the cell by endocytosis. Acidification of the endosome triggers M2 ion channel activity. The influx of protons into virion interior is believed to disrupt interactions between the viral ribonucleoprotein (RNP), matrix protein 1 (M1), and lipid bilayers, thereby freeing the viral genome from interaction with viral proteins and enabling RNA segments to migrate to the host cell nucleus, where influenza virus RNA transcription and replication occur. Also plays a role in viral proteins secretory pathway. Elevates the intravesicular pH of normally acidic compartments, such as trans-Golgi network, preventing newly formed hemagglutinin from premature switching to the fusion-active conformation.</text>
</comment>
<comment type="activity regulation">
    <text>The M2 protein from most influenza A strains is inhibited by amantadine and rimantadine, resulting in viral uncoating incapacity. Emergence of amantadine-resistant variants is usually rapid.</text>
</comment>
<comment type="subunit">
    <text evidence="1">Homotetramer; composed of two disulfide-linked dimers held together by non-covalent interactions. May interact with matrix protein 1.</text>
</comment>
<comment type="subcellular location">
    <subcellularLocation>
        <location evidence="1">Virion membrane</location>
    </subcellularLocation>
    <subcellularLocation>
        <location evidence="1">Host apical cell membrane</location>
        <topology evidence="1">Single-pass type III membrane protein</topology>
    </subcellularLocation>
    <text evidence="1">Abundantly expressed at the apical plasma membrane in infected polarized epithelial cells, in close proximity to budding and assembled virions. Minor component of virions (only 16-20 molecules/virion).</text>
</comment>
<comment type="alternative products">
    <event type="alternative splicing"/>
    <isoform>
        <id>P0C5T0-1</id>
        <name>M2</name>
        <sequence type="displayed"/>
    </isoform>
    <isoform>
        <id>Q80A02-1</id>
        <name>M1</name>
        <sequence type="external"/>
    </isoform>
    <text>Only the first 9 residues are shared by the 2 isoforms.</text>
</comment>
<comment type="domain">
    <text evidence="1">Cytoplasmic tail plays an important role in virion assembly and morphogenesis.</text>
</comment>
<comment type="miscellaneous">
    <text evidence="1">When the channel is activated, one or more imidazole moieties of His-37 probably become bi-protonated.</text>
</comment>
<comment type="similarity">
    <text evidence="1">Belongs to the influenza viruses matrix protein M2 family.</text>
</comment>
<name>M2_I01A0</name>
<dbReference type="EMBL" id="AF509045">
    <property type="status" value="NOT_ANNOTATED_CDS"/>
    <property type="molecule type" value="Genomic_DNA"/>
</dbReference>
<dbReference type="SMR" id="P0C5T0"/>
<dbReference type="GO" id="GO:0020002">
    <property type="term" value="C:host cell plasma membrane"/>
    <property type="evidence" value="ECO:0007669"/>
    <property type="project" value="UniProtKB-SubCell"/>
</dbReference>
<dbReference type="GO" id="GO:0016020">
    <property type="term" value="C:membrane"/>
    <property type="evidence" value="ECO:0007669"/>
    <property type="project" value="UniProtKB-UniRule"/>
</dbReference>
<dbReference type="GO" id="GO:0055036">
    <property type="term" value="C:virion membrane"/>
    <property type="evidence" value="ECO:0007669"/>
    <property type="project" value="UniProtKB-SubCell"/>
</dbReference>
<dbReference type="GO" id="GO:0005216">
    <property type="term" value="F:monoatomic ion channel activity"/>
    <property type="evidence" value="ECO:0007669"/>
    <property type="project" value="UniProtKB-UniRule"/>
</dbReference>
<dbReference type="GO" id="GO:0015078">
    <property type="term" value="F:proton transmembrane transporter activity"/>
    <property type="evidence" value="ECO:0007669"/>
    <property type="project" value="UniProtKB-UniRule"/>
</dbReference>
<dbReference type="GO" id="GO:0051259">
    <property type="term" value="P:protein complex oligomerization"/>
    <property type="evidence" value="ECO:0007669"/>
    <property type="project" value="UniProtKB-UniRule"/>
</dbReference>
<dbReference type="GO" id="GO:0044694">
    <property type="term" value="P:symbiont genome entry into host cell via pore formation in plasma membrane"/>
    <property type="evidence" value="ECO:0007669"/>
    <property type="project" value="UniProtKB-UniRule"/>
</dbReference>
<dbReference type="GO" id="GO:0140321">
    <property type="term" value="P:symbiont-mediated suppression of host autophagy"/>
    <property type="evidence" value="ECO:0007669"/>
    <property type="project" value="UniProtKB-KW"/>
</dbReference>
<dbReference type="Gene3D" id="6.10.250.1640">
    <property type="match status" value="1"/>
</dbReference>
<dbReference type="HAMAP" id="MF_04069">
    <property type="entry name" value="INFV_M2"/>
    <property type="match status" value="1"/>
</dbReference>
<dbReference type="InterPro" id="IPR002089">
    <property type="entry name" value="Flu_M2"/>
</dbReference>
<dbReference type="Pfam" id="PF00599">
    <property type="entry name" value="Flu_M2"/>
    <property type="match status" value="1"/>
</dbReference>
<keyword id="KW-0025">Alternative splicing</keyword>
<keyword id="KW-1015">Disulfide bond</keyword>
<keyword id="KW-1032">Host cell membrane</keyword>
<keyword id="KW-1043">Host membrane</keyword>
<keyword id="KW-0945">Host-virus interaction</keyword>
<keyword id="KW-0375">Hydrogen ion transport</keyword>
<keyword id="KW-1083">Inhibition of host autophagy by virus</keyword>
<keyword id="KW-0407">Ion channel</keyword>
<keyword id="KW-0406">Ion transport</keyword>
<keyword id="KW-0449">Lipoprotein</keyword>
<keyword id="KW-0472">Membrane</keyword>
<keyword id="KW-0564">Palmitate</keyword>
<keyword id="KW-0597">Phosphoprotein</keyword>
<keyword id="KW-0735">Signal-anchor</keyword>
<keyword id="KW-0812">Transmembrane</keyword>
<keyword id="KW-1133">Transmembrane helix</keyword>
<keyword id="KW-0813">Transport</keyword>
<keyword id="KW-1182">Viral ion channel</keyword>
<keyword id="KW-0946">Virion</keyword>
<gene>
    <name evidence="1" type="primary">M</name>
</gene>